<accession>Q0BNS7</accession>
<organism>
    <name type="scientific">Francisella tularensis subsp. holarctica (strain OSU18)</name>
    <dbReference type="NCBI Taxonomy" id="393011"/>
    <lineage>
        <taxon>Bacteria</taxon>
        <taxon>Pseudomonadati</taxon>
        <taxon>Pseudomonadota</taxon>
        <taxon>Gammaproteobacteria</taxon>
        <taxon>Thiotrichales</taxon>
        <taxon>Francisellaceae</taxon>
        <taxon>Francisella</taxon>
    </lineage>
</organism>
<protein>
    <recommendedName>
        <fullName evidence="1">Large ribosomal subunit protein uL3</fullName>
    </recommendedName>
    <alternativeName>
        <fullName evidence="3">50S ribosomal protein L3</fullName>
    </alternativeName>
</protein>
<evidence type="ECO:0000255" key="1">
    <source>
        <dbReference type="HAMAP-Rule" id="MF_01325"/>
    </source>
</evidence>
<evidence type="ECO:0000256" key="2">
    <source>
        <dbReference type="SAM" id="MobiDB-lite"/>
    </source>
</evidence>
<evidence type="ECO:0000305" key="3"/>
<name>RL3_FRATO</name>
<reference key="1">
    <citation type="journal article" date="2006" name="J. Bacteriol.">
        <title>Chromosome rearrangement and diversification of Francisella tularensis revealed by the type B (OSU18) genome sequence.</title>
        <authorList>
            <person name="Petrosino J.F."/>
            <person name="Xiang Q."/>
            <person name="Karpathy S.E."/>
            <person name="Jiang H."/>
            <person name="Yerrapragada S."/>
            <person name="Liu Y."/>
            <person name="Gioia J."/>
            <person name="Hemphill L."/>
            <person name="Gonzalez A."/>
            <person name="Raghavan T.M."/>
            <person name="Uzman A."/>
            <person name="Fox G.E."/>
            <person name="Highlander S."/>
            <person name="Reichard M."/>
            <person name="Morton R.J."/>
            <person name="Clinkenbeard K.D."/>
            <person name="Weinstock G.M."/>
        </authorList>
    </citation>
    <scope>NUCLEOTIDE SEQUENCE [LARGE SCALE GENOMIC DNA]</scope>
    <source>
        <strain>OSU18</strain>
    </source>
</reference>
<keyword id="KW-0488">Methylation</keyword>
<keyword id="KW-0687">Ribonucleoprotein</keyword>
<keyword id="KW-0689">Ribosomal protein</keyword>
<keyword id="KW-0694">RNA-binding</keyword>
<keyword id="KW-0699">rRNA-binding</keyword>
<proteinExistence type="inferred from homology"/>
<gene>
    <name evidence="1" type="primary">rplC</name>
    <name type="ordered locus">FTH_0231</name>
</gene>
<dbReference type="EMBL" id="CP000437">
    <property type="protein sequence ID" value="ABI82257.1"/>
    <property type="molecule type" value="Genomic_DNA"/>
</dbReference>
<dbReference type="RefSeq" id="WP_003027202.1">
    <property type="nucleotide sequence ID" value="NC_017463.1"/>
</dbReference>
<dbReference type="SMR" id="Q0BNS7"/>
<dbReference type="GeneID" id="75264261"/>
<dbReference type="KEGG" id="fth:FTH_0231"/>
<dbReference type="GO" id="GO:0022625">
    <property type="term" value="C:cytosolic large ribosomal subunit"/>
    <property type="evidence" value="ECO:0007669"/>
    <property type="project" value="TreeGrafter"/>
</dbReference>
<dbReference type="GO" id="GO:0019843">
    <property type="term" value="F:rRNA binding"/>
    <property type="evidence" value="ECO:0007669"/>
    <property type="project" value="UniProtKB-UniRule"/>
</dbReference>
<dbReference type="GO" id="GO:0003735">
    <property type="term" value="F:structural constituent of ribosome"/>
    <property type="evidence" value="ECO:0007669"/>
    <property type="project" value="InterPro"/>
</dbReference>
<dbReference type="GO" id="GO:0006412">
    <property type="term" value="P:translation"/>
    <property type="evidence" value="ECO:0007669"/>
    <property type="project" value="UniProtKB-UniRule"/>
</dbReference>
<dbReference type="FunFam" id="2.40.30.10:FF:000004">
    <property type="entry name" value="50S ribosomal protein L3"/>
    <property type="match status" value="1"/>
</dbReference>
<dbReference type="FunFam" id="3.30.160.810:FF:000001">
    <property type="entry name" value="50S ribosomal protein L3"/>
    <property type="match status" value="1"/>
</dbReference>
<dbReference type="Gene3D" id="3.30.160.810">
    <property type="match status" value="1"/>
</dbReference>
<dbReference type="Gene3D" id="2.40.30.10">
    <property type="entry name" value="Translation factors"/>
    <property type="match status" value="1"/>
</dbReference>
<dbReference type="HAMAP" id="MF_01325_B">
    <property type="entry name" value="Ribosomal_uL3_B"/>
    <property type="match status" value="1"/>
</dbReference>
<dbReference type="InterPro" id="IPR000597">
    <property type="entry name" value="Ribosomal_uL3"/>
</dbReference>
<dbReference type="InterPro" id="IPR019927">
    <property type="entry name" value="Ribosomal_uL3_bac/org-type"/>
</dbReference>
<dbReference type="InterPro" id="IPR019926">
    <property type="entry name" value="Ribosomal_uL3_CS"/>
</dbReference>
<dbReference type="InterPro" id="IPR009000">
    <property type="entry name" value="Transl_B-barrel_sf"/>
</dbReference>
<dbReference type="NCBIfam" id="TIGR03625">
    <property type="entry name" value="L3_bact"/>
    <property type="match status" value="1"/>
</dbReference>
<dbReference type="PANTHER" id="PTHR11229">
    <property type="entry name" value="50S RIBOSOMAL PROTEIN L3"/>
    <property type="match status" value="1"/>
</dbReference>
<dbReference type="PANTHER" id="PTHR11229:SF16">
    <property type="entry name" value="LARGE RIBOSOMAL SUBUNIT PROTEIN UL3C"/>
    <property type="match status" value="1"/>
</dbReference>
<dbReference type="Pfam" id="PF00297">
    <property type="entry name" value="Ribosomal_L3"/>
    <property type="match status" value="1"/>
</dbReference>
<dbReference type="SUPFAM" id="SSF50447">
    <property type="entry name" value="Translation proteins"/>
    <property type="match status" value="1"/>
</dbReference>
<dbReference type="PROSITE" id="PS00474">
    <property type="entry name" value="RIBOSOMAL_L3"/>
    <property type="match status" value="1"/>
</dbReference>
<sequence>MSLGLVGRKCGMTRIFTEDGVSIPVTVVQVEPNKVTQVKTVEKDGYNAIQVTTGFKKRSNVNKPMAGHYAKASVEPGRGLWEFTVDAAAEYQVGSSFDATMFEAGQKVDVRGVSKGKGFQGGVKRHNFATQDATHGNSLSHRVHGSTGQNQTPGRVFKNKKMAGHLGNENVTIQSLEVVRVDAENGLLLLKGGIPGSVGGDIIVTPAVKS</sequence>
<feature type="chain" id="PRO_1000052053" description="Large ribosomal subunit protein uL3">
    <location>
        <begin position="1"/>
        <end position="210"/>
    </location>
</feature>
<feature type="region of interest" description="Disordered" evidence="2">
    <location>
        <begin position="133"/>
        <end position="152"/>
    </location>
</feature>
<feature type="modified residue" description="N5-methylglutamine" evidence="1">
    <location>
        <position position="151"/>
    </location>
</feature>
<comment type="function">
    <text evidence="1">One of the primary rRNA binding proteins, it binds directly near the 3'-end of the 23S rRNA, where it nucleates assembly of the 50S subunit.</text>
</comment>
<comment type="subunit">
    <text evidence="1">Part of the 50S ribosomal subunit. Forms a cluster with proteins L14 and L19.</text>
</comment>
<comment type="PTM">
    <text evidence="1">Methylated by PrmB.</text>
</comment>
<comment type="similarity">
    <text evidence="1">Belongs to the universal ribosomal protein uL3 family.</text>
</comment>